<evidence type="ECO:0000250" key="1">
    <source>
        <dbReference type="UniProtKB" id="L7NCR0"/>
    </source>
</evidence>
<evidence type="ECO:0000269" key="2">
    <source>
    </source>
</evidence>
<evidence type="ECO:0000303" key="3">
    <source>
    </source>
</evidence>
<evidence type="ECO:0000303" key="4">
    <source>
    </source>
</evidence>
<evidence type="ECO:0000305" key="5"/>
<evidence type="ECO:0000305" key="6">
    <source>
    </source>
</evidence>
<evidence type="ECO:0000305" key="7">
    <source>
    </source>
</evidence>
<accession>L7NCR8</accession>
<keyword id="KW-0964">Secreted</keyword>
<keyword id="KW-0843">Virulence</keyword>
<comment type="function">
    <text evidence="2">Secreted effector that contributes strongly to virulence during infection by P.capsici. Causes large necrotic areas in both host C.annuum and non-host N.benthamiana.</text>
</comment>
<comment type="subcellular location">
    <subcellularLocation>
        <location evidence="6">Secreted</location>
    </subcellularLocation>
</comment>
<comment type="induction">
    <text evidence="2">Expression gradually increases to a maximum at 7 days after inoculation of pepper leaves.</text>
</comment>
<comment type="domain">
    <text evidence="1">Key residues/motif important for the effector activities are degenerated in most NLPs, including the nlp24 peptide consisting of the conserved region I (11-aa immunogenic part) and conserved region II (the heptapeptide GHRHDWE motif) that is important for phytotoxic activity.</text>
</comment>
<comment type="similarity">
    <text evidence="5">Belongs to the Necrosis inducing protein (NPP1) family.</text>
</comment>
<dbReference type="EMBL" id="HM543180">
    <property type="protein sequence ID" value="AEJ88245.1"/>
    <property type="molecule type" value="Genomic_DNA"/>
</dbReference>
<dbReference type="SMR" id="L7NCR8"/>
<dbReference type="VEuPathDB" id="FungiDB:DVH05_013302"/>
<dbReference type="GO" id="GO:0005576">
    <property type="term" value="C:extracellular region"/>
    <property type="evidence" value="ECO:0007669"/>
    <property type="project" value="UniProtKB-SubCell"/>
</dbReference>
<dbReference type="InterPro" id="IPR008701">
    <property type="entry name" value="NPP1"/>
</dbReference>
<dbReference type="PANTHER" id="PTHR33657">
    <property type="entry name" value="DOMAIN PROTEIN, PUTATIVE (AFU_ORTHOLOGUE AFUA_5G00600)-RELATED"/>
    <property type="match status" value="1"/>
</dbReference>
<dbReference type="PANTHER" id="PTHR33657:SF8">
    <property type="entry name" value="DOMAIN PROTEIN, PUTATIVE (AFU_ORTHOLOGUE AFUA_5G00600)-RELATED"/>
    <property type="match status" value="1"/>
</dbReference>
<dbReference type="Pfam" id="PF05630">
    <property type="entry name" value="NPP1"/>
    <property type="match status" value="1"/>
</dbReference>
<name>NLP14_PHYCP</name>
<protein>
    <recommendedName>
        <fullName evidence="4">NLP effector protein 14</fullName>
    </recommendedName>
    <alternativeName>
        <fullName evidence="3">Necrosis-inducing protein 14</fullName>
    </alternativeName>
    <alternativeName>
        <fullName evidence="3">Nep1-like protein 14</fullName>
    </alternativeName>
</protein>
<feature type="chain" id="PRO_0000447427" description="NLP effector protein 14">
    <location>
        <begin position="1"/>
        <end position="133"/>
    </location>
</feature>
<feature type="short sequence motif" description="Conserved undecapeptide motifI I" evidence="1">
    <location>
        <begin position="1"/>
        <end position="9"/>
    </location>
</feature>
<feature type="short sequence motif" description="Hepta-peptide GHRHDWE motif II" evidence="7">
    <location>
        <begin position="16"/>
        <end position="22"/>
    </location>
</feature>
<gene>
    <name evidence="4" type="primary">NLP14</name>
    <name evidence="3" type="synonym">NPP14</name>
</gene>
<organism>
    <name type="scientific">Phytophthora capsici</name>
    <dbReference type="NCBI Taxonomy" id="4784"/>
    <lineage>
        <taxon>Eukaryota</taxon>
        <taxon>Sar</taxon>
        <taxon>Stramenopiles</taxon>
        <taxon>Oomycota</taxon>
        <taxon>Peronosporales</taxon>
        <taxon>Peronosporaceae</taxon>
        <taxon>Phytophthora</taxon>
    </lineage>
</organism>
<reference key="1">
    <citation type="journal article" date="2011" name="Genet. Mol. Res.">
        <title>Identification of 18 genes encoding necrosis-inducing proteins from the plant pathogen Phytophthora capsici (Pythiaceae: Oomycetes).</title>
        <authorList>
            <person name="Feng B.Z."/>
            <person name="Li P.Q."/>
            <person name="Fu L."/>
            <person name="Sun B.B."/>
            <person name="Zhang X.G."/>
        </authorList>
    </citation>
    <scope>NUCLEOTIDE SEQUENCE [GENOMIC DNA]</scope>
    <scope>DOMAIN</scope>
</reference>
<reference key="2">
    <citation type="journal article" date="2014" name="BMC Plant Biol.">
        <title>Characterization of necrosis-inducing NLP proteins in Phytophthora capsici.</title>
        <authorList>
            <person name="Feng B.Z."/>
            <person name="Zhu X.P."/>
            <person name="Fu L."/>
            <person name="Lv R.F."/>
            <person name="Storey D."/>
            <person name="Tooley P."/>
            <person name="Zhang X.G."/>
        </authorList>
    </citation>
    <scope>INDUCTION</scope>
    <scope>FUNCTION</scope>
</reference>
<sequence length="133" mass="14858">MYSWYFPKDSPSTGLGHRHDWEHVIVWIDNPEIAEPKILAVTPSAHSGYSAQVPPDADKVEGTSVKVNYESKWPINHALGSTTKGGDYQDLIMWEQLTDAARLALENTDFGKANVPMKDGNFVGKLNKAWPFD</sequence>
<proteinExistence type="evidence at transcript level"/>